<organism>
    <name type="scientific">Reston ebolavirus (strain Reston-89)</name>
    <name type="common">REBOV</name>
    <name type="synonym">Reston Ebola virus</name>
    <dbReference type="NCBI Taxonomy" id="386032"/>
    <lineage>
        <taxon>Viruses</taxon>
        <taxon>Riboviria</taxon>
        <taxon>Orthornavirae</taxon>
        <taxon>Negarnaviricota</taxon>
        <taxon>Haploviricotina</taxon>
        <taxon>Monjiviricetes</taxon>
        <taxon>Mononegavirales</taxon>
        <taxon>Filoviridae</taxon>
        <taxon>Orthoebolavirus</taxon>
        <taxon>Orthoebolavirus restonense</taxon>
        <taxon>Reston ebolavirus</taxon>
    </lineage>
</organism>
<name>VSSGP_EBORR</name>
<reference key="1">
    <citation type="journal article" date="1996" name="Proc. Natl. Acad. Sci. U.S.A.">
        <title>The virion glycoproteins of Ebola viruses are encoded in two reading frames and are expressed through transcriptional editing.</title>
        <authorList>
            <person name="Sanchez A."/>
            <person name="Trappier S.G."/>
            <person name="Mahy B.W.J."/>
            <person name="Peters C.J."/>
            <person name="Nichol S.T."/>
        </authorList>
    </citation>
    <scope>NUCLEOTIDE SEQUENCE [GENOMIC RNA]</scope>
    <scope>RNA EDITING</scope>
</reference>
<reference key="2">
    <citation type="submission" date="1997-11" db="EMBL/GenBank/DDBJ databases">
        <authorList>
            <person name="Volchkov V.E."/>
        </authorList>
    </citation>
    <scope>NUCLEOTIDE SEQUENCE [GENOMIC RNA]</scope>
</reference>
<reference key="3">
    <citation type="journal article" date="2002" name="Virus Res.">
        <title>Molecular characterization of an isolate from the 1989/90 epizootic of Ebola virus Reston among macaques imported into the United States.</title>
        <authorList>
            <person name="Groseth A."/>
            <person name="Stroeher U."/>
            <person name="Theriault S."/>
            <person name="Feldmann H."/>
        </authorList>
    </citation>
    <scope>NUCLEOTIDE SEQUENCE [GENOMIC RNA]</scope>
</reference>
<reference key="4">
    <citation type="journal article" date="2005" name="Virology">
        <title>A reconstituted replication and transcription system for Ebola virus Reston and comparison with Ebola virus Zaire.</title>
        <authorList>
            <person name="Boehmann Y."/>
            <person name="Enterlein S."/>
            <person name="Randolf A."/>
            <person name="Muehlberger E.I."/>
        </authorList>
    </citation>
    <scope>NUCLEOTIDE SEQUENCE [GENOMIC RNA]</scope>
    <source>
        <strain>Isolate Pennsylvania-89</strain>
    </source>
</reference>
<sequence>MGSGYQLLQLPRERFRKTSFLVWVIILFQRAISMPLGIVTNSTLKATEIDQLVCRDKLSSTSQLKSVGLNLEGNGIATDVPSATKRWGFRSGVPPKVVSYEAGEWAENCYNLEIKKSDGSECLPLPPDGVRGFPRCRYVHKVQGTGPCPGDLAFHKNGAFFLYDRLASTVIYRGTTFAEGVVAFLILSEPKKHFWKATPAHEPVNTTDDSTSYYMTLTLSYEMSNFGGNESNTLFKVDNHTYVQLDRPHTPQFLVQLNETLRRNNRLSNSTGRLTWTLDPKIEPDVGEWAFWETKKKLFPTTSWRKLAFPNSINPHQQLLRSEPGGNCPRKN</sequence>
<proteinExistence type="inferred from homology"/>
<protein>
    <recommendedName>
        <fullName>Super small secreted glycoprotein</fullName>
        <shortName>SsGP</shortName>
    </recommendedName>
</protein>
<comment type="subcellular location">
    <subcellularLocation>
        <location evidence="4">Secreted</location>
    </subcellularLocation>
</comment>
<comment type="RNA editing">
    <location>
        <position position="295" evidence="3"/>
    </location>
    <text>Partially edited. RNA editing at this position consists of an insertion of one or two adenine nucleotides. The sequence displayed here is the super small secreted glycoprotein ssGP, derived from the +2A edited RNA. The unedited RNA gives rise to the small secreted glycoprotein sGP (AC Q66800), the +1A edited RNA gives rise to the full-length transmembrane glycoprotein GP (AC Q66799).</text>
</comment>
<comment type="similarity">
    <text evidence="4">Belongs to the filoviruses glycoprotein family.</text>
</comment>
<accession>P0C771</accession>
<dbReference type="EMBL" id="U23152">
    <property type="status" value="NOT_ANNOTATED_CDS"/>
    <property type="molecule type" value="Genomic_RNA"/>
</dbReference>
<dbReference type="EMBL" id="AF034645">
    <property type="status" value="NOT_ANNOTATED_CDS"/>
    <property type="molecule type" value="Genomic_RNA"/>
</dbReference>
<dbReference type="EMBL" id="AF522874">
    <property type="status" value="NOT_ANNOTATED_CDS"/>
    <property type="molecule type" value="Genomic_RNA"/>
</dbReference>
<dbReference type="EMBL" id="AY769362">
    <property type="status" value="NOT_ANNOTATED_CDS"/>
    <property type="molecule type" value="Genomic_RNA"/>
</dbReference>
<dbReference type="SMR" id="P0C771"/>
<dbReference type="GlyCosmos" id="P0C771">
    <property type="glycosylation" value="6 sites, No reported glycans"/>
</dbReference>
<dbReference type="Proteomes" id="UP000007207">
    <property type="component" value="Segment"/>
</dbReference>
<dbReference type="Proteomes" id="UP000138664">
    <property type="component" value="Genome"/>
</dbReference>
<dbReference type="GO" id="GO:0005576">
    <property type="term" value="C:extracellular region"/>
    <property type="evidence" value="ECO:0007669"/>
    <property type="project" value="UniProtKB-SubCell"/>
</dbReference>
<dbReference type="InterPro" id="IPR014625">
    <property type="entry name" value="GPC_FiloV"/>
</dbReference>
<dbReference type="InterPro" id="IPR002561">
    <property type="entry name" value="GPC_filovir-type_extra_dom"/>
</dbReference>
<dbReference type="Pfam" id="PF01611">
    <property type="entry name" value="Filo_glycop"/>
    <property type="match status" value="1"/>
</dbReference>
<dbReference type="PIRSF" id="PIRSF036874">
    <property type="entry name" value="GPC_FiloV"/>
    <property type="match status" value="1"/>
</dbReference>
<feature type="signal peptide" evidence="2">
    <location>
        <begin position="1"/>
        <end position="33"/>
    </location>
</feature>
<feature type="chain" id="PRO_0000391498" description="Super small secreted glycoprotein">
    <location>
        <begin position="34"/>
        <end position="332"/>
    </location>
</feature>
<feature type="glycosylation site" description="N-linked (GlcNAc...) asparagine; by host" evidence="2">
    <location>
        <position position="41"/>
    </location>
</feature>
<feature type="glycosylation site" description="N-linked (GlcNAc...) asparagine; by host" evidence="2">
    <location>
        <position position="205"/>
    </location>
</feature>
<feature type="glycosylation site" description="N-linked (GlcNAc...) asparagine; by host" evidence="2">
    <location>
        <position position="229"/>
    </location>
</feature>
<feature type="glycosylation site" description="N-linked (GlcNAc...) asparagine; by host" evidence="2">
    <location>
        <position position="239"/>
    </location>
</feature>
<feature type="glycosylation site" description="N-linked (GlcNAc...) asparagine; by host" evidence="2">
    <location>
        <position position="258"/>
    </location>
</feature>
<feature type="glycosylation site" description="N-linked (GlcNAc...) asparagine; by host" evidence="2">
    <location>
        <position position="269"/>
    </location>
</feature>
<feature type="disulfide bond" description="Interchain" evidence="1">
    <location>
        <position position="54"/>
    </location>
</feature>
<feature type="disulfide bond" evidence="1">
    <location>
        <begin position="109"/>
        <end position="136"/>
    </location>
</feature>
<feature type="disulfide bond" evidence="1">
    <location>
        <begin position="122"/>
        <end position="148"/>
    </location>
</feature>
<gene>
    <name type="primary">GP</name>
</gene>
<organismHost>
    <name type="scientific">Epomops franqueti</name>
    <name type="common">Franquet's epauletted fruit bat</name>
    <name type="synonym">Epomophorus franqueti</name>
    <dbReference type="NCBI Taxonomy" id="77231"/>
</organismHost>
<organismHost>
    <name type="scientific">Homo sapiens</name>
    <name type="common">Human</name>
    <dbReference type="NCBI Taxonomy" id="9606"/>
</organismHost>
<organismHost>
    <name type="scientific">Myonycteris torquata</name>
    <name type="common">Little collared fruit bat</name>
    <dbReference type="NCBI Taxonomy" id="77243"/>
</organismHost>
<organismHost>
    <name type="scientific">Sus scrofa</name>
    <name type="common">Pig</name>
    <dbReference type="NCBI Taxonomy" id="9823"/>
</organismHost>
<keyword id="KW-1015">Disulfide bond</keyword>
<keyword id="KW-0325">Glycoprotein</keyword>
<keyword id="KW-0691">RNA editing</keyword>
<keyword id="KW-0964">Secreted</keyword>
<keyword id="KW-0732">Signal</keyword>
<evidence type="ECO:0000250" key="1"/>
<evidence type="ECO:0000255" key="2"/>
<evidence type="ECO:0000269" key="3">
    <source>
    </source>
</evidence>
<evidence type="ECO:0000305" key="4"/>